<comment type="function">
    <text evidence="1 3">Potassium channel regulatory subunit that modulate the delayed rectifier voltage-gated potassium channel activity of KCNB1 and KCNB2 by altering their kinetics, expression levels, and shifting the half-inactivation potential to more polarized values. While it does not form functional channels on its own, it can form functional heterotetrameric channels with KCNB1 and KCNB2 (By similarity). Each regulatory subunit has unique regulatory properties that can lead to extensive inhibition, significant changes in kinetics, and/or substantial shifts in the voltage dependencies of the inactivation process (By similarity).</text>
</comment>
<comment type="subunit">
    <text evidence="1 3">Heterotetramer with KCNB1 (By similarity). Heterotetramer with KCNB2 (By similarity). Does not form homomultimers (By similarity).</text>
</comment>
<comment type="subcellular location">
    <subcellularLocation>
        <location evidence="3">Cell membrane</location>
        <topology evidence="3">Multi-pass membrane protein</topology>
    </subcellularLocation>
    <text evidence="3">May not reach the plasma membrane but remain in an intracellular compartment in the absence of KCNB1 or KCNB2.</text>
</comment>
<comment type="domain">
    <text evidence="2">The transmembrane segment S4 functions as a voltage-sensor and is characterized by a series of positively charged amino acids at every third position. Channel opening and closing is effected by a conformation change that affects the position and orientation of the voltage-sensor paddle formed by S3 and S4 within the membrane. A transmembrane electric field that is positive inside would push the positively charged S4 segment outwards, thereby opening the pore, while a field that is negative inside would pull the S4 segment inwards and close the pore. Changes in the position and orientation of S4 are then transmitted to the activation gate formed by the inner helix bundle via the S4-S5 linker region.</text>
</comment>
<comment type="similarity">
    <text evidence="5">Belongs to the potassium channel family. S (TC 1.A.1.2) subfamily. Kv9.1/KCNS1 sub-subfamily.</text>
</comment>
<reference key="1">
    <citation type="journal article" date="2007" name="Genome Res.">
        <title>Comparative sequence analyses reveal rapid and divergent evolutionary changes of the WFDC locus in the primate lineage.</title>
        <authorList>
            <consortium name="NISC comparative sequencing program"/>
            <person name="Hurle B."/>
            <person name="Swanson W."/>
            <person name="Green E.D."/>
        </authorList>
    </citation>
    <scope>NUCLEOTIDE SEQUENCE [GENOMIC DNA]</scope>
</reference>
<keyword id="KW-1003">Cell membrane</keyword>
<keyword id="KW-0407">Ion channel</keyword>
<keyword id="KW-0406">Ion transport</keyword>
<keyword id="KW-0472">Membrane</keyword>
<keyword id="KW-0630">Potassium</keyword>
<keyword id="KW-0631">Potassium channel</keyword>
<keyword id="KW-0633">Potassium transport</keyword>
<keyword id="KW-0812">Transmembrane</keyword>
<keyword id="KW-1133">Transmembrane helix</keyword>
<keyword id="KW-0813">Transport</keyword>
<keyword id="KW-0851">Voltage-gated channel</keyword>
<feature type="chain" id="PRO_0000289615" description="Delayed-rectifier potassium channel regulatory subunit KCNS1">
    <location>
        <begin position="1"/>
        <end position="529"/>
    </location>
</feature>
<feature type="topological domain" description="Cytoplasmic" evidence="2">
    <location>
        <begin position="1"/>
        <end position="217"/>
    </location>
</feature>
<feature type="transmembrane region" description="Helical; Name=Segment S1" evidence="2">
    <location>
        <begin position="218"/>
        <end position="239"/>
    </location>
</feature>
<feature type="topological domain" description="Extracellular" evidence="2">
    <location>
        <begin position="240"/>
        <end position="270"/>
    </location>
</feature>
<feature type="transmembrane region" description="Helical; Name=Segment S2" evidence="2">
    <location>
        <begin position="271"/>
        <end position="293"/>
    </location>
</feature>
<feature type="topological domain" description="Cytoplasmic" evidence="2">
    <location>
        <begin position="294"/>
        <end position="304"/>
    </location>
</feature>
<feature type="transmembrane region" description="Helical; Name=Segment S3" evidence="2">
    <location>
        <begin position="305"/>
        <end position="322"/>
    </location>
</feature>
<feature type="topological domain" description="Extracellular" evidence="2">
    <location>
        <begin position="323"/>
        <end position="340"/>
    </location>
</feature>
<feature type="transmembrane region" description="Helical; Voltage-sensor; Name=Segment S4" evidence="2">
    <location>
        <begin position="341"/>
        <end position="361"/>
    </location>
</feature>
<feature type="topological domain" description="Cytoplasmic" evidence="2">
    <location>
        <begin position="362"/>
        <end position="376"/>
    </location>
</feature>
<feature type="transmembrane region" description="Helical; Name=Segment S5" evidence="2">
    <location>
        <begin position="377"/>
        <end position="398"/>
    </location>
</feature>
<feature type="topological domain" description="Extracellular" evidence="2">
    <location>
        <begin position="399"/>
        <end position="411"/>
    </location>
</feature>
<feature type="intramembrane region" description="Helical; Name=Pore helix" evidence="2">
    <location>
        <begin position="412"/>
        <end position="423"/>
    </location>
</feature>
<feature type="intramembrane region" evidence="2">
    <location>
        <begin position="424"/>
        <end position="431"/>
    </location>
</feature>
<feature type="topological domain" description="Extracellular" evidence="2">
    <location>
        <begin position="432"/>
        <end position="438"/>
    </location>
</feature>
<feature type="transmembrane region" description="Helical; Name=Segment S6" evidence="2">
    <location>
        <begin position="439"/>
        <end position="467"/>
    </location>
</feature>
<feature type="topological domain" description="Cytoplasmic" evidence="2">
    <location>
        <begin position="468"/>
        <end position="529"/>
    </location>
</feature>
<feature type="region of interest" description="Disordered" evidence="4">
    <location>
        <begin position="500"/>
        <end position="529"/>
    </location>
</feature>
<feature type="short sequence motif" description="Selectivity filter" evidence="2">
    <location>
        <begin position="424"/>
        <end position="429"/>
    </location>
</feature>
<feature type="compositionally biased region" description="Basic and acidic residues" evidence="4">
    <location>
        <begin position="502"/>
        <end position="514"/>
    </location>
</feature>
<sequence>MLMLLVRGTRYESLRSKVVLPTPLGGRGTEVLVSESPSPDTGIRWRQSDEALRVNVGGVRRLLSARALARFPGTRLGRLQAAASEEQARRLCDDYDAAAREFYFDRHPGFFLGLLHFYRTGHLHVLDELCVFAFGQEADYWGLGENVLAACCRARYLERRLTQPRAWDEDSDTPSSVDPCPDEISDVQRELARYGAARCGRLRRRLWLTMENPGYSLPSKLFSCVSISVVLASIAAMCIHSLPEYQAREAAAAVAAVAAGRSPEGVRDDPVLRRLEYFCIAWFSFEVSSRLLLAPSTRNFFCHPLNLIDIVSVLPFYLTLLAGVALGDQGGTGGKELGHLGKVVQVFRLMRIFRVLKLARHSTGLRSLGATLKHSYREVGILLLYLAVGVSVFSGVAYTAEKEEDVGFNTIPACWWWGTVSMTTVGYGDVVPVTVAGKLAASGCILGGILVVALPITIIFNKFSHFYRRQKALEAAVRNSNHQEFEDLLSSVDEVSEASLETSREISQEGRSADLETQAPSEPPHPQMY</sequence>
<protein>
    <recommendedName>
        <fullName evidence="3">Delayed-rectifier potassium channel regulatory subunit KCNS1</fullName>
    </recommendedName>
    <alternativeName>
        <fullName>Delayed-rectifier K(+) channel alpha subunit 1</fullName>
    </alternativeName>
    <alternativeName>
        <fullName evidence="3">Delayed-rectifier potassium channel subunit Kv9.1</fullName>
    </alternativeName>
</protein>
<accession>A4K2P6</accession>
<organism>
    <name type="scientific">Colobus guereza</name>
    <name type="common">Mantled guereza</name>
    <name type="synonym">Eastern black-and-white colobus monkey</name>
    <dbReference type="NCBI Taxonomy" id="33548"/>
    <lineage>
        <taxon>Eukaryota</taxon>
        <taxon>Metazoa</taxon>
        <taxon>Chordata</taxon>
        <taxon>Craniata</taxon>
        <taxon>Vertebrata</taxon>
        <taxon>Euteleostomi</taxon>
        <taxon>Mammalia</taxon>
        <taxon>Eutheria</taxon>
        <taxon>Euarchontoglires</taxon>
        <taxon>Primates</taxon>
        <taxon>Haplorrhini</taxon>
        <taxon>Catarrhini</taxon>
        <taxon>Cercopithecidae</taxon>
        <taxon>Colobinae</taxon>
        <taxon>Colobus</taxon>
    </lineage>
</organism>
<evidence type="ECO:0000250" key="1">
    <source>
        <dbReference type="UniProtKB" id="O35173"/>
    </source>
</evidence>
<evidence type="ECO:0000250" key="2">
    <source>
        <dbReference type="UniProtKB" id="P63142"/>
    </source>
</evidence>
<evidence type="ECO:0000250" key="3">
    <source>
        <dbReference type="UniProtKB" id="Q96KK3"/>
    </source>
</evidence>
<evidence type="ECO:0000256" key="4">
    <source>
        <dbReference type="SAM" id="MobiDB-lite"/>
    </source>
</evidence>
<evidence type="ECO:0000305" key="5"/>
<proteinExistence type="inferred from homology"/>
<name>KCNS1_COLGU</name>
<gene>
    <name evidence="3" type="primary">KCNS1</name>
</gene>
<dbReference type="EMBL" id="DP000038">
    <property type="protein sequence ID" value="ABO52931.1"/>
    <property type="molecule type" value="Genomic_DNA"/>
</dbReference>
<dbReference type="SMR" id="A4K2P6"/>
<dbReference type="GO" id="GO:0048471">
    <property type="term" value="C:perinuclear region of cytoplasm"/>
    <property type="evidence" value="ECO:0000250"/>
    <property type="project" value="UniProtKB"/>
</dbReference>
<dbReference type="GO" id="GO:0005886">
    <property type="term" value="C:plasma membrane"/>
    <property type="evidence" value="ECO:0000250"/>
    <property type="project" value="UniProtKB"/>
</dbReference>
<dbReference type="GO" id="GO:0008076">
    <property type="term" value="C:voltage-gated potassium channel complex"/>
    <property type="evidence" value="ECO:0000250"/>
    <property type="project" value="UniProtKB"/>
</dbReference>
<dbReference type="GO" id="GO:0005251">
    <property type="term" value="F:delayed rectifier potassium channel activity"/>
    <property type="evidence" value="ECO:0007669"/>
    <property type="project" value="TreeGrafter"/>
</dbReference>
<dbReference type="GO" id="GO:0015459">
    <property type="term" value="F:potassium channel regulator activity"/>
    <property type="evidence" value="ECO:0000250"/>
    <property type="project" value="UniProtKB"/>
</dbReference>
<dbReference type="GO" id="GO:0001508">
    <property type="term" value="P:action potential"/>
    <property type="evidence" value="ECO:0007669"/>
    <property type="project" value="TreeGrafter"/>
</dbReference>
<dbReference type="GO" id="GO:0006813">
    <property type="term" value="P:potassium ion transport"/>
    <property type="evidence" value="ECO:0000250"/>
    <property type="project" value="UniProtKB"/>
</dbReference>
<dbReference type="GO" id="GO:0051260">
    <property type="term" value="P:protein homooligomerization"/>
    <property type="evidence" value="ECO:0007669"/>
    <property type="project" value="InterPro"/>
</dbReference>
<dbReference type="GO" id="GO:1901379">
    <property type="term" value="P:regulation of potassium ion transmembrane transport"/>
    <property type="evidence" value="ECO:0000250"/>
    <property type="project" value="UniProtKB"/>
</dbReference>
<dbReference type="FunFam" id="1.10.287.70:FF:000005">
    <property type="entry name" value="potassium voltage-gated channel subfamily G member 1"/>
    <property type="match status" value="1"/>
</dbReference>
<dbReference type="FunFam" id="3.30.710.10:FF:000102">
    <property type="entry name" value="Potassium voltage-gated channel subfamily S member 1"/>
    <property type="match status" value="1"/>
</dbReference>
<dbReference type="FunFam" id="1.20.120.350:FF:000029">
    <property type="entry name" value="Potassium voltage-gated channel subfamily S member 2"/>
    <property type="match status" value="1"/>
</dbReference>
<dbReference type="Gene3D" id="1.10.287.70">
    <property type="match status" value="1"/>
</dbReference>
<dbReference type="Gene3D" id="3.30.710.10">
    <property type="entry name" value="Potassium Channel Kv1.1, Chain A"/>
    <property type="match status" value="1"/>
</dbReference>
<dbReference type="Gene3D" id="1.20.120.350">
    <property type="entry name" value="Voltage-gated potassium channels. Chain C"/>
    <property type="match status" value="1"/>
</dbReference>
<dbReference type="InterPro" id="IPR000210">
    <property type="entry name" value="BTB/POZ_dom"/>
</dbReference>
<dbReference type="InterPro" id="IPR005821">
    <property type="entry name" value="Ion_trans_dom"/>
</dbReference>
<dbReference type="InterPro" id="IPR003968">
    <property type="entry name" value="K_chnl_volt-dep_Kv"/>
</dbReference>
<dbReference type="InterPro" id="IPR003971">
    <property type="entry name" value="K_chnl_volt-dep_Kv5/Kv9"/>
</dbReference>
<dbReference type="InterPro" id="IPR011333">
    <property type="entry name" value="SKP1/BTB/POZ_sf"/>
</dbReference>
<dbReference type="InterPro" id="IPR003131">
    <property type="entry name" value="T1-type_BTB"/>
</dbReference>
<dbReference type="InterPro" id="IPR028325">
    <property type="entry name" value="VG_K_chnl"/>
</dbReference>
<dbReference type="InterPro" id="IPR027359">
    <property type="entry name" value="Volt_channel_dom_sf"/>
</dbReference>
<dbReference type="PANTHER" id="PTHR11537:SF61">
    <property type="entry name" value="POTASSIUM VOLTAGE-GATED CHANNEL SUBFAMILY S MEMBER 1"/>
    <property type="match status" value="1"/>
</dbReference>
<dbReference type="PANTHER" id="PTHR11537">
    <property type="entry name" value="VOLTAGE-GATED POTASSIUM CHANNEL"/>
    <property type="match status" value="1"/>
</dbReference>
<dbReference type="Pfam" id="PF02214">
    <property type="entry name" value="BTB_2"/>
    <property type="match status" value="1"/>
</dbReference>
<dbReference type="Pfam" id="PF00520">
    <property type="entry name" value="Ion_trans"/>
    <property type="match status" value="1"/>
</dbReference>
<dbReference type="PRINTS" id="PR00169">
    <property type="entry name" value="KCHANNEL"/>
</dbReference>
<dbReference type="PRINTS" id="PR01494">
    <property type="entry name" value="KV9CHANNEL"/>
</dbReference>
<dbReference type="PRINTS" id="PR01491">
    <property type="entry name" value="KVCHANNEL"/>
</dbReference>
<dbReference type="SMART" id="SM00225">
    <property type="entry name" value="BTB"/>
    <property type="match status" value="1"/>
</dbReference>
<dbReference type="SUPFAM" id="SSF54695">
    <property type="entry name" value="POZ domain"/>
    <property type="match status" value="1"/>
</dbReference>
<dbReference type="SUPFAM" id="SSF81324">
    <property type="entry name" value="Voltage-gated potassium channels"/>
    <property type="match status" value="1"/>
</dbReference>